<feature type="chain" id="PRO_1000184147" description="Large ribosomal subunit protein uL30">
    <location>
        <begin position="1"/>
        <end position="61"/>
    </location>
</feature>
<sequence length="61" mass="6755">MSDKKTVKVTLVKSLIGRIESHRACARGLGLKKLNQTVEVLDTPENRGMINKISFLVKCEG</sequence>
<dbReference type="EMBL" id="CP001154">
    <property type="protein sequence ID" value="ACO73266.1"/>
    <property type="molecule type" value="Genomic_DNA"/>
</dbReference>
<dbReference type="RefSeq" id="WP_012695760.1">
    <property type="nucleotide sequence ID" value="NC_012559.1"/>
</dbReference>
<dbReference type="SMR" id="C1DAT5"/>
<dbReference type="STRING" id="557598.LHK_00271"/>
<dbReference type="GeneID" id="75109489"/>
<dbReference type="KEGG" id="lhk:LHK_00271"/>
<dbReference type="eggNOG" id="COG1841">
    <property type="taxonomic scope" value="Bacteria"/>
</dbReference>
<dbReference type="HOGENOM" id="CLU_131047_1_4_4"/>
<dbReference type="Proteomes" id="UP000002010">
    <property type="component" value="Chromosome"/>
</dbReference>
<dbReference type="GO" id="GO:0022625">
    <property type="term" value="C:cytosolic large ribosomal subunit"/>
    <property type="evidence" value="ECO:0007669"/>
    <property type="project" value="TreeGrafter"/>
</dbReference>
<dbReference type="GO" id="GO:0003735">
    <property type="term" value="F:structural constituent of ribosome"/>
    <property type="evidence" value="ECO:0007669"/>
    <property type="project" value="InterPro"/>
</dbReference>
<dbReference type="GO" id="GO:0006412">
    <property type="term" value="P:translation"/>
    <property type="evidence" value="ECO:0007669"/>
    <property type="project" value="UniProtKB-UniRule"/>
</dbReference>
<dbReference type="CDD" id="cd01658">
    <property type="entry name" value="Ribosomal_L30"/>
    <property type="match status" value="1"/>
</dbReference>
<dbReference type="FunFam" id="3.30.1390.20:FF:000001">
    <property type="entry name" value="50S ribosomal protein L30"/>
    <property type="match status" value="1"/>
</dbReference>
<dbReference type="Gene3D" id="3.30.1390.20">
    <property type="entry name" value="Ribosomal protein L30, ferredoxin-like fold domain"/>
    <property type="match status" value="1"/>
</dbReference>
<dbReference type="HAMAP" id="MF_01371_B">
    <property type="entry name" value="Ribosomal_uL30_B"/>
    <property type="match status" value="1"/>
</dbReference>
<dbReference type="InterPro" id="IPR036919">
    <property type="entry name" value="Ribo_uL30_ferredoxin-like_sf"/>
</dbReference>
<dbReference type="InterPro" id="IPR005996">
    <property type="entry name" value="Ribosomal_uL30_bac-type"/>
</dbReference>
<dbReference type="InterPro" id="IPR016082">
    <property type="entry name" value="Ribosomal_uL30_ferredoxin-like"/>
</dbReference>
<dbReference type="NCBIfam" id="TIGR01308">
    <property type="entry name" value="rpmD_bact"/>
    <property type="match status" value="1"/>
</dbReference>
<dbReference type="PANTHER" id="PTHR15892:SF2">
    <property type="entry name" value="LARGE RIBOSOMAL SUBUNIT PROTEIN UL30M"/>
    <property type="match status" value="1"/>
</dbReference>
<dbReference type="PANTHER" id="PTHR15892">
    <property type="entry name" value="MITOCHONDRIAL RIBOSOMAL PROTEIN L30"/>
    <property type="match status" value="1"/>
</dbReference>
<dbReference type="Pfam" id="PF00327">
    <property type="entry name" value="Ribosomal_L30"/>
    <property type="match status" value="1"/>
</dbReference>
<dbReference type="PIRSF" id="PIRSF002211">
    <property type="entry name" value="Ribosomal_L30_bac-type"/>
    <property type="match status" value="1"/>
</dbReference>
<dbReference type="SUPFAM" id="SSF55129">
    <property type="entry name" value="Ribosomal protein L30p/L7e"/>
    <property type="match status" value="1"/>
</dbReference>
<comment type="subunit">
    <text evidence="1">Part of the 50S ribosomal subunit.</text>
</comment>
<comment type="similarity">
    <text evidence="1">Belongs to the universal ribosomal protein uL30 family.</text>
</comment>
<gene>
    <name evidence="1" type="primary">rpmD</name>
    <name type="ordered locus">LHK_00271</name>
</gene>
<organism>
    <name type="scientific">Laribacter hongkongensis (strain HLHK9)</name>
    <dbReference type="NCBI Taxonomy" id="557598"/>
    <lineage>
        <taxon>Bacteria</taxon>
        <taxon>Pseudomonadati</taxon>
        <taxon>Pseudomonadota</taxon>
        <taxon>Betaproteobacteria</taxon>
        <taxon>Neisseriales</taxon>
        <taxon>Aquaspirillaceae</taxon>
        <taxon>Laribacter</taxon>
    </lineage>
</organism>
<protein>
    <recommendedName>
        <fullName evidence="1">Large ribosomal subunit protein uL30</fullName>
    </recommendedName>
    <alternativeName>
        <fullName evidence="2">50S ribosomal protein L30</fullName>
    </alternativeName>
</protein>
<evidence type="ECO:0000255" key="1">
    <source>
        <dbReference type="HAMAP-Rule" id="MF_01371"/>
    </source>
</evidence>
<evidence type="ECO:0000305" key="2"/>
<reference key="1">
    <citation type="journal article" date="2009" name="PLoS Genet.">
        <title>The complete genome and proteome of Laribacter hongkongensis reveal potential mechanisms for adaptations to different temperatures and habitats.</title>
        <authorList>
            <person name="Woo P.C.Y."/>
            <person name="Lau S.K.P."/>
            <person name="Tse H."/>
            <person name="Teng J.L.L."/>
            <person name="Curreem S.O."/>
            <person name="Tsang A.K.L."/>
            <person name="Fan R.Y.Y."/>
            <person name="Wong G.K.M."/>
            <person name="Huang Y."/>
            <person name="Loman N.J."/>
            <person name="Snyder L.A.S."/>
            <person name="Cai J.J."/>
            <person name="Huang J.-D."/>
            <person name="Mak W."/>
            <person name="Pallen M.J."/>
            <person name="Lok S."/>
            <person name="Yuen K.-Y."/>
        </authorList>
    </citation>
    <scope>NUCLEOTIDE SEQUENCE [LARGE SCALE GENOMIC DNA]</scope>
    <source>
        <strain>HLHK9</strain>
    </source>
</reference>
<keyword id="KW-1185">Reference proteome</keyword>
<keyword id="KW-0687">Ribonucleoprotein</keyword>
<keyword id="KW-0689">Ribosomal protein</keyword>
<proteinExistence type="inferred from homology"/>
<accession>C1DAT5</accession>
<name>RL30_LARHH</name>